<dbReference type="EC" id="2.1.1.67" evidence="1"/>
<dbReference type="EMBL" id="BA000031">
    <property type="protein sequence ID" value="BAC59559.1"/>
    <property type="molecule type" value="Genomic_DNA"/>
</dbReference>
<dbReference type="RefSeq" id="NP_797675.1">
    <property type="nucleotide sequence ID" value="NC_004603.1"/>
</dbReference>
<dbReference type="RefSeq" id="WP_005480776.1">
    <property type="nucleotide sequence ID" value="NC_004603.1"/>
</dbReference>
<dbReference type="SMR" id="Q87Q54"/>
<dbReference type="GeneID" id="1188801"/>
<dbReference type="KEGG" id="vpa:VP1296"/>
<dbReference type="PATRIC" id="fig|223926.6.peg.1236"/>
<dbReference type="eggNOG" id="COG0500">
    <property type="taxonomic scope" value="Bacteria"/>
</dbReference>
<dbReference type="HOGENOM" id="CLU_085515_1_0_6"/>
<dbReference type="Proteomes" id="UP000002493">
    <property type="component" value="Chromosome 1"/>
</dbReference>
<dbReference type="GO" id="GO:0005737">
    <property type="term" value="C:cytoplasm"/>
    <property type="evidence" value="ECO:0007669"/>
    <property type="project" value="UniProtKB-SubCell"/>
</dbReference>
<dbReference type="GO" id="GO:0008119">
    <property type="term" value="F:thiopurine S-methyltransferase activity"/>
    <property type="evidence" value="ECO:0007669"/>
    <property type="project" value="UniProtKB-UniRule"/>
</dbReference>
<dbReference type="GO" id="GO:0032259">
    <property type="term" value="P:methylation"/>
    <property type="evidence" value="ECO:0007669"/>
    <property type="project" value="UniProtKB-KW"/>
</dbReference>
<dbReference type="GO" id="GO:0010038">
    <property type="term" value="P:response to metal ion"/>
    <property type="evidence" value="ECO:0007669"/>
    <property type="project" value="InterPro"/>
</dbReference>
<dbReference type="CDD" id="cd02440">
    <property type="entry name" value="AdoMet_MTases"/>
    <property type="match status" value="1"/>
</dbReference>
<dbReference type="FunFam" id="3.40.50.150:FF:000101">
    <property type="entry name" value="Thiopurine S-methyltransferase"/>
    <property type="match status" value="1"/>
</dbReference>
<dbReference type="Gene3D" id="3.40.50.150">
    <property type="entry name" value="Vaccinia Virus protein VP39"/>
    <property type="match status" value="1"/>
</dbReference>
<dbReference type="HAMAP" id="MF_00812">
    <property type="entry name" value="Thiopur_methtran"/>
    <property type="match status" value="1"/>
</dbReference>
<dbReference type="InterPro" id="IPR029063">
    <property type="entry name" value="SAM-dependent_MTases_sf"/>
</dbReference>
<dbReference type="InterPro" id="IPR022474">
    <property type="entry name" value="Thiopur_S-MeTfrase_Se/Te_detox"/>
</dbReference>
<dbReference type="InterPro" id="IPR025835">
    <property type="entry name" value="Thiopurine_S-MeTrfase"/>
</dbReference>
<dbReference type="InterPro" id="IPR008854">
    <property type="entry name" value="TPMT"/>
</dbReference>
<dbReference type="NCBIfam" id="NF009732">
    <property type="entry name" value="PRK13255.1"/>
    <property type="match status" value="1"/>
</dbReference>
<dbReference type="NCBIfam" id="TIGR03840">
    <property type="entry name" value="TMPT_Se_Te"/>
    <property type="match status" value="1"/>
</dbReference>
<dbReference type="PANTHER" id="PTHR10259">
    <property type="entry name" value="THIOPURINE S-METHYLTRANSFERASE"/>
    <property type="match status" value="1"/>
</dbReference>
<dbReference type="PANTHER" id="PTHR10259:SF11">
    <property type="entry name" value="THIOPURINE S-METHYLTRANSFERASE"/>
    <property type="match status" value="1"/>
</dbReference>
<dbReference type="Pfam" id="PF05724">
    <property type="entry name" value="TPMT"/>
    <property type="match status" value="1"/>
</dbReference>
<dbReference type="PIRSF" id="PIRSF023956">
    <property type="entry name" value="Thiopurine_S-methyltransferase"/>
    <property type="match status" value="1"/>
</dbReference>
<dbReference type="SUPFAM" id="SSF53335">
    <property type="entry name" value="S-adenosyl-L-methionine-dependent methyltransferases"/>
    <property type="match status" value="1"/>
</dbReference>
<dbReference type="PROSITE" id="PS51585">
    <property type="entry name" value="SAM_MT_TPMT"/>
    <property type="match status" value="1"/>
</dbReference>
<organism>
    <name type="scientific">Vibrio parahaemolyticus serotype O3:K6 (strain RIMD 2210633)</name>
    <dbReference type="NCBI Taxonomy" id="223926"/>
    <lineage>
        <taxon>Bacteria</taxon>
        <taxon>Pseudomonadati</taxon>
        <taxon>Pseudomonadota</taxon>
        <taxon>Gammaproteobacteria</taxon>
        <taxon>Vibrionales</taxon>
        <taxon>Vibrionaceae</taxon>
        <taxon>Vibrio</taxon>
    </lineage>
</organism>
<name>TPMT_VIBPA</name>
<protein>
    <recommendedName>
        <fullName evidence="1">Thiopurine S-methyltransferase</fullName>
        <ecNumber evidence="1">2.1.1.67</ecNumber>
    </recommendedName>
    <alternativeName>
        <fullName evidence="1">Thiopurine methyltransferase</fullName>
    </alternativeName>
</protein>
<reference key="1">
    <citation type="journal article" date="2003" name="Lancet">
        <title>Genome sequence of Vibrio parahaemolyticus: a pathogenic mechanism distinct from that of V. cholerae.</title>
        <authorList>
            <person name="Makino K."/>
            <person name="Oshima K."/>
            <person name="Kurokawa K."/>
            <person name="Yokoyama K."/>
            <person name="Uda T."/>
            <person name="Tagomori K."/>
            <person name="Iijima Y."/>
            <person name="Najima M."/>
            <person name="Nakano M."/>
            <person name="Yamashita A."/>
            <person name="Kubota Y."/>
            <person name="Kimura S."/>
            <person name="Yasunaga T."/>
            <person name="Honda T."/>
            <person name="Shinagawa H."/>
            <person name="Hattori M."/>
            <person name="Iida T."/>
        </authorList>
    </citation>
    <scope>NUCLEOTIDE SEQUENCE [LARGE SCALE GENOMIC DNA]</scope>
    <source>
        <strain>RIMD 2210633</strain>
    </source>
</reference>
<keyword id="KW-0963">Cytoplasm</keyword>
<keyword id="KW-0489">Methyltransferase</keyword>
<keyword id="KW-0949">S-adenosyl-L-methionine</keyword>
<keyword id="KW-0808">Transferase</keyword>
<sequence length="216" mass="24702">MRDQEFWHSKWASNQIGFHLEDVNPLLPAYWHHANPKREDKVLVPLCGKSEDLVWLATKHDSVEGVELSQIAVRSFFAEHFYTPTVTPISGMHELYQFDELSIYTGDFFTAPVSQADIVYDRAALVALPQDMREEYVARLKQLLNPGGRILLVTLNYPQEEMAGPPFSVPLEEIQQLFAGYKVTCLNVDQADEHHPKIAKKGLSRFSEEVYLIEAQ</sequence>
<proteinExistence type="inferred from homology"/>
<evidence type="ECO:0000255" key="1">
    <source>
        <dbReference type="HAMAP-Rule" id="MF_00812"/>
    </source>
</evidence>
<accession>Q87Q54</accession>
<feature type="chain" id="PRO_0000220135" description="Thiopurine S-methyltransferase">
    <location>
        <begin position="1"/>
        <end position="216"/>
    </location>
</feature>
<feature type="binding site" evidence="1">
    <location>
        <position position="11"/>
    </location>
    <ligand>
        <name>S-adenosyl-L-methionine</name>
        <dbReference type="ChEBI" id="CHEBI:59789"/>
    </ligand>
</feature>
<feature type="binding site" evidence="1">
    <location>
        <position position="46"/>
    </location>
    <ligand>
        <name>S-adenosyl-L-methionine</name>
        <dbReference type="ChEBI" id="CHEBI:59789"/>
    </ligand>
</feature>
<feature type="binding site" evidence="1">
    <location>
        <position position="67"/>
    </location>
    <ligand>
        <name>S-adenosyl-L-methionine</name>
        <dbReference type="ChEBI" id="CHEBI:59789"/>
    </ligand>
</feature>
<feature type="binding site" evidence="1">
    <location>
        <position position="122"/>
    </location>
    <ligand>
        <name>S-adenosyl-L-methionine</name>
        <dbReference type="ChEBI" id="CHEBI:59789"/>
    </ligand>
</feature>
<gene>
    <name evidence="1" type="primary">tpm</name>
    <name type="ordered locus">VP1296</name>
</gene>
<comment type="catalytic activity">
    <reaction evidence="1">
        <text>S-adenosyl-L-methionine + a thiopurine = S-adenosyl-L-homocysteine + a thiopurine S-methylether.</text>
        <dbReference type="EC" id="2.1.1.67"/>
    </reaction>
</comment>
<comment type="subcellular location">
    <subcellularLocation>
        <location evidence="1">Cytoplasm</location>
    </subcellularLocation>
</comment>
<comment type="similarity">
    <text evidence="1">Belongs to the class I-like SAM-binding methyltransferase superfamily. TPMT family.</text>
</comment>